<evidence type="ECO:0000255" key="1">
    <source>
        <dbReference type="HAMAP-Rule" id="MF_00456"/>
    </source>
</evidence>
<comment type="function">
    <text evidence="1">Catalyzes the transfer of a phosphate group to glutamate to form L-glutamate 5-phosphate.</text>
</comment>
<comment type="catalytic activity">
    <reaction evidence="1">
        <text>L-glutamate + ATP = L-glutamyl 5-phosphate + ADP</text>
        <dbReference type="Rhea" id="RHEA:14877"/>
        <dbReference type="ChEBI" id="CHEBI:29985"/>
        <dbReference type="ChEBI" id="CHEBI:30616"/>
        <dbReference type="ChEBI" id="CHEBI:58274"/>
        <dbReference type="ChEBI" id="CHEBI:456216"/>
        <dbReference type="EC" id="2.7.2.11"/>
    </reaction>
</comment>
<comment type="pathway">
    <text evidence="1">Amino-acid biosynthesis; L-proline biosynthesis; L-glutamate 5-semialdehyde from L-glutamate: step 1/2.</text>
</comment>
<comment type="subcellular location">
    <subcellularLocation>
        <location evidence="1">Cytoplasm</location>
    </subcellularLocation>
</comment>
<comment type="similarity">
    <text evidence="1">Belongs to the glutamate 5-kinase family.</text>
</comment>
<feature type="chain" id="PRO_0000109735" description="Glutamate 5-kinase">
    <location>
        <begin position="1"/>
        <end position="273"/>
    </location>
</feature>
<feature type="binding site" evidence="1">
    <location>
        <position position="15"/>
    </location>
    <ligand>
        <name>ATP</name>
        <dbReference type="ChEBI" id="CHEBI:30616"/>
    </ligand>
</feature>
<feature type="binding site" evidence="1">
    <location>
        <position position="55"/>
    </location>
    <ligand>
        <name>substrate</name>
    </ligand>
</feature>
<feature type="binding site" evidence="1">
    <location>
        <position position="142"/>
    </location>
    <ligand>
        <name>substrate</name>
    </ligand>
</feature>
<feature type="binding site" evidence="1">
    <location>
        <position position="158"/>
    </location>
    <ligand>
        <name>substrate</name>
    </ligand>
</feature>
<feature type="binding site" evidence="1">
    <location>
        <begin position="178"/>
        <end position="179"/>
    </location>
    <ligand>
        <name>ATP</name>
        <dbReference type="ChEBI" id="CHEBI:30616"/>
    </ligand>
</feature>
<feature type="binding site" evidence="1">
    <location>
        <begin position="220"/>
        <end position="226"/>
    </location>
    <ligand>
        <name>ATP</name>
        <dbReference type="ChEBI" id="CHEBI:30616"/>
    </ligand>
</feature>
<protein>
    <recommendedName>
        <fullName evidence="1">Glutamate 5-kinase</fullName>
        <ecNumber evidence="1">2.7.2.11</ecNumber>
    </recommendedName>
    <alternativeName>
        <fullName evidence="1">Gamma-glutamyl kinase</fullName>
        <shortName evidence="1">GK</shortName>
    </alternativeName>
</protein>
<reference key="1">
    <citation type="journal article" date="2002" name="Proc. Natl. Acad. Sci. U.S.A.">
        <title>Genome sequence of a serotype M3 strain of group A Streptococcus: phage-encoded toxins, the high-virulence phenotype, and clone emergence.</title>
        <authorList>
            <person name="Beres S.B."/>
            <person name="Sylva G.L."/>
            <person name="Barbian K.D."/>
            <person name="Lei B."/>
            <person name="Hoff J.S."/>
            <person name="Mammarella N.D."/>
            <person name="Liu M.-Y."/>
            <person name="Smoot J.C."/>
            <person name="Porcella S.F."/>
            <person name="Parkins L.D."/>
            <person name="Campbell D.S."/>
            <person name="Smith T.M."/>
            <person name="McCormick J.K."/>
            <person name="Leung D.Y.M."/>
            <person name="Schlievert P.M."/>
            <person name="Musser J.M."/>
        </authorList>
    </citation>
    <scope>NUCLEOTIDE SEQUENCE [LARGE SCALE GENOMIC DNA]</scope>
    <source>
        <strain>ATCC BAA-595 / MGAS315</strain>
    </source>
</reference>
<dbReference type="EC" id="2.7.2.11" evidence="1"/>
<dbReference type="EMBL" id="AE014074">
    <property type="protein sequence ID" value="AAM80014.1"/>
    <property type="molecule type" value="Genomic_DNA"/>
</dbReference>
<dbReference type="RefSeq" id="WP_011054855.1">
    <property type="nucleotide sequence ID" value="NC_004070.1"/>
</dbReference>
<dbReference type="SMR" id="P0DD22"/>
<dbReference type="KEGG" id="spg:SpyM3_1407"/>
<dbReference type="HOGENOM" id="CLU_025400_0_2_9"/>
<dbReference type="UniPathway" id="UPA00098">
    <property type="reaction ID" value="UER00359"/>
</dbReference>
<dbReference type="Proteomes" id="UP000000564">
    <property type="component" value="Chromosome"/>
</dbReference>
<dbReference type="GO" id="GO:0005829">
    <property type="term" value="C:cytosol"/>
    <property type="evidence" value="ECO:0007669"/>
    <property type="project" value="TreeGrafter"/>
</dbReference>
<dbReference type="GO" id="GO:0005524">
    <property type="term" value="F:ATP binding"/>
    <property type="evidence" value="ECO:0007669"/>
    <property type="project" value="UniProtKB-KW"/>
</dbReference>
<dbReference type="GO" id="GO:0004349">
    <property type="term" value="F:glutamate 5-kinase activity"/>
    <property type="evidence" value="ECO:0007669"/>
    <property type="project" value="UniProtKB-UniRule"/>
</dbReference>
<dbReference type="GO" id="GO:0055129">
    <property type="term" value="P:L-proline biosynthetic process"/>
    <property type="evidence" value="ECO:0007669"/>
    <property type="project" value="UniProtKB-UniRule"/>
</dbReference>
<dbReference type="CDD" id="cd04242">
    <property type="entry name" value="AAK_G5K_ProB"/>
    <property type="match status" value="1"/>
</dbReference>
<dbReference type="FunFam" id="3.40.1160.10:FF:000006">
    <property type="entry name" value="Glutamate 5-kinase"/>
    <property type="match status" value="1"/>
</dbReference>
<dbReference type="Gene3D" id="3.40.1160.10">
    <property type="entry name" value="Acetylglutamate kinase-like"/>
    <property type="match status" value="1"/>
</dbReference>
<dbReference type="HAMAP" id="MF_00456">
    <property type="entry name" value="ProB"/>
    <property type="match status" value="1"/>
</dbReference>
<dbReference type="InterPro" id="IPR036393">
    <property type="entry name" value="AceGlu_kinase-like_sf"/>
</dbReference>
<dbReference type="InterPro" id="IPR001048">
    <property type="entry name" value="Asp/Glu/Uridylate_kinase"/>
</dbReference>
<dbReference type="InterPro" id="IPR041739">
    <property type="entry name" value="G5K_ProB"/>
</dbReference>
<dbReference type="InterPro" id="IPR001057">
    <property type="entry name" value="Glu/AcGlu_kinase"/>
</dbReference>
<dbReference type="InterPro" id="IPR011529">
    <property type="entry name" value="Glu_5kinase"/>
</dbReference>
<dbReference type="InterPro" id="IPR005715">
    <property type="entry name" value="Glu_5kinase/COase_Synthase"/>
</dbReference>
<dbReference type="InterPro" id="IPR019797">
    <property type="entry name" value="Glutamate_5-kinase_CS"/>
</dbReference>
<dbReference type="NCBIfam" id="TIGR01027">
    <property type="entry name" value="proB"/>
    <property type="match status" value="1"/>
</dbReference>
<dbReference type="PANTHER" id="PTHR43654">
    <property type="entry name" value="GLUTAMATE 5-KINASE"/>
    <property type="match status" value="1"/>
</dbReference>
<dbReference type="PANTHER" id="PTHR43654:SF1">
    <property type="entry name" value="ISOPENTENYL PHOSPHATE KINASE"/>
    <property type="match status" value="1"/>
</dbReference>
<dbReference type="Pfam" id="PF00696">
    <property type="entry name" value="AA_kinase"/>
    <property type="match status" value="1"/>
</dbReference>
<dbReference type="PIRSF" id="PIRSF000729">
    <property type="entry name" value="GK"/>
    <property type="match status" value="1"/>
</dbReference>
<dbReference type="PRINTS" id="PR00474">
    <property type="entry name" value="GLU5KINASE"/>
</dbReference>
<dbReference type="SUPFAM" id="SSF53633">
    <property type="entry name" value="Carbamate kinase-like"/>
    <property type="match status" value="1"/>
</dbReference>
<dbReference type="PROSITE" id="PS00902">
    <property type="entry name" value="GLUTAMATE_5_KINASE"/>
    <property type="match status" value="1"/>
</dbReference>
<name>PROB_STRP3</name>
<gene>
    <name evidence="1" type="primary">proB</name>
    <name type="ordered locus">SpyM3_1407</name>
</gene>
<sequence length="273" mass="29763">MMKRQFEDVTRIVIKIGTSSLVLPTGKINLEKIDQLAFVISSLMNKGKEVILVSSGAMGFGLDILKMEKRPTNLAKQQAVSSVGQVAMMSLYSQIFAHYQTNVSQILLTRDVVVFPESLANVTNAFESLISFGIVPIVNENDAVSVDEMDHATKFGDNDRLSAVVAGITKADLLIMLSDIDGLFDKNPTIYEDAQLRSHVAVITQEIIASAGGAGSKFGTGGMLSKIQSAQMVFENKGQMVLMNGANPRDILRVLEGQPLGTWFKQIEEVRHD</sequence>
<keyword id="KW-0028">Amino-acid biosynthesis</keyword>
<keyword id="KW-0067">ATP-binding</keyword>
<keyword id="KW-0963">Cytoplasm</keyword>
<keyword id="KW-0418">Kinase</keyword>
<keyword id="KW-0547">Nucleotide-binding</keyword>
<keyword id="KW-0641">Proline biosynthesis</keyword>
<keyword id="KW-0808">Transferase</keyword>
<proteinExistence type="inferred from homology"/>
<accession>P0DD22</accession>
<accession>Q8K6C1</accession>
<organism>
    <name type="scientific">Streptococcus pyogenes serotype M3 (strain ATCC BAA-595 / MGAS315)</name>
    <dbReference type="NCBI Taxonomy" id="198466"/>
    <lineage>
        <taxon>Bacteria</taxon>
        <taxon>Bacillati</taxon>
        <taxon>Bacillota</taxon>
        <taxon>Bacilli</taxon>
        <taxon>Lactobacillales</taxon>
        <taxon>Streptococcaceae</taxon>
        <taxon>Streptococcus</taxon>
    </lineage>
</organism>